<proteinExistence type="evidence at protein level"/>
<keyword id="KW-0002">3D-structure</keyword>
<keyword id="KW-0342">GTP-binding</keyword>
<keyword id="KW-0349">Heme</keyword>
<keyword id="KW-0408">Iron</keyword>
<keyword id="KW-0460">Magnesium</keyword>
<keyword id="KW-0479">Metal-binding</keyword>
<keyword id="KW-0547">Nucleotide-binding</keyword>
<keyword id="KW-1185">Reference proteome</keyword>
<keyword id="KW-0804">Transcription</keyword>
<keyword id="KW-0805">Transcription regulation</keyword>
<keyword id="KW-0808">Transferase</keyword>
<organism>
    <name type="scientific">Escherichia coli (strain K12)</name>
    <dbReference type="NCBI Taxonomy" id="83333"/>
    <lineage>
        <taxon>Bacteria</taxon>
        <taxon>Pseudomonadati</taxon>
        <taxon>Pseudomonadota</taxon>
        <taxon>Gammaproteobacteria</taxon>
        <taxon>Enterobacterales</taxon>
        <taxon>Enterobacteriaceae</taxon>
        <taxon>Escherichia</taxon>
    </lineage>
</organism>
<comment type="function">
    <text>Globin-coupled heme-based oxygen sensor protein displaying diguanylate cyclase (DGC) activity in response to oxygen availability. Thus, catalyzes the synthesis of cyclic diguanylate (c-di-GMP) via the condensation of 2 GTP molecules. Is involved in the modulation of intracellular c-di-GMP levels, in association with DosP which catalyzes the degradation of c-di-GMP (PDE activity). Cyclic-di-GMP is a second messenger which controls cell surface-associated traits in bacteria. DosC regulates biofilm formation through the oxygen-dependent activation of the csgBAC operon, which encodes curli structural subunits, while not affecting the expression of the regulatory operon csgDEFG. DosC, but not the other DGCs in E.coli, also promotes the production of the exopolysaccharide poly-N-acetylglucosamine (PNAG) through up-regulation of the expression of the PNAG biosynthetic pgaABCD operon, independently of CsrA.</text>
</comment>
<comment type="function">
    <text>Overexpression leads to an increased level of c-di-GMP, which leads to changes in the cell surface, to abnormal cell division, increased biofilm formation and decreased swimming (the latter 2 in strain W3110). In a strain able to produce cellulose (strain TOB1, a fecal isolate) overexpression leads to an increase in cellulose production.</text>
</comment>
<comment type="catalytic activity">
    <reaction evidence="5 9">
        <text>2 GTP = 3',3'-c-di-GMP + 2 diphosphate</text>
        <dbReference type="Rhea" id="RHEA:24898"/>
        <dbReference type="ChEBI" id="CHEBI:33019"/>
        <dbReference type="ChEBI" id="CHEBI:37565"/>
        <dbReference type="ChEBI" id="CHEBI:58805"/>
        <dbReference type="EC" id="2.7.7.65"/>
    </reaction>
</comment>
<comment type="cofactor">
    <cofactor>
        <name>heme</name>
        <dbReference type="ChEBI" id="CHEBI:30413"/>
    </cofactor>
    <text>Binds 1 heme group per subunit. The Fe(2+) state binds O(2) and CO while the Fe(3+) state can bind CN(-) and imidazole.</text>
</comment>
<comment type="cofactor">
    <cofactor evidence="1">
        <name>Mg(2+)</name>
        <dbReference type="ChEBI" id="CHEBI:18420"/>
    </cofactor>
    <text evidence="1">Binds 1 Mg(2+) ion per subunit.</text>
</comment>
<comment type="activity regulation">
    <text evidence="9">Activity depends on O(2)-binding and heme redox state: the Fe(III), Fe(II)-O(2), and Fe(II)-CO complexes of DosC are active forms, whereas Fe(II) and Fe(II)-NO complexes are inactive forms.</text>
</comment>
<comment type="biophysicochemical properties">
    <kinetics>
        <text evidence="9">The Fe(III), Fe(II)-O(2), and Fe(II)-CO complexes of DosC display DGC activity with turnover numbers of 0.066, 0.022, and 0.022 min(-1), respectively. The DGC reaction catalyzed by DosC is the rate-determining step for c-di-GMP homeostasis. Binds O(2), CO, cyanide and imidazole with a dissociation constant of 14 uM, 0.095 uM, 4.7 uM and 0.055 uM, respectively.</text>
    </kinetics>
    <redoxPotential>
        <text>E(0) is -17 mV.</text>
    </redoxPotential>
</comment>
<comment type="pathway">
    <text>Purine metabolism; 3',5'-cyclic di-GMP biosynthesis.</text>
</comment>
<comment type="subunit">
    <text>Forms a complex with DosP.</text>
</comment>
<comment type="induction">
    <text evidence="4 7">By RpoS in the late exponential growth phase and upon entry into stationary phase. Expression is higher at 28 than 37 degrees Celsius. In rich medium DosC and DgcM are the major RpoS-dependent GGDEF-domain containing proteins in the cell, whereas in minimal medium it is the major RpoS-dependent GGDEF-domain containing protein. Highly expressed on solid medium. A member of the dosCP operon.</text>
</comment>
<comment type="domain">
    <text evidence="9">Is composed of an N-terminal sensory globin-fold domain that binds heme and oxygen, and a C-terminal GGDEF diguanylate cyclase domain.</text>
</comment>
<comment type="disruption phenotype">
    <text evidence="6 7 8">Disruption results in a 2.5-fold reduction in surface adhesion, a 3.5-fold reduction in biofilm formation, a large reduction in curli production, a drastic decrease in csgB expression (400-fold reduction in aerobic growth) and in an approximately 3.5-fold reduction in pgaA transcript levels in comparison with wild-type. Disruption partially suppresses the reduced motility of a pdeH disruption; concomitant disruption of dosC, dgcE, dgcQ and dgcN completely restores motility, suggesting these 4 genes, together with the c-di-GMP phosphodiesterase PdeH, form a network that regulates cell motility by altering levels of c-di-GMP.</text>
</comment>
<comment type="sequence caution" evidence="12">
    <conflict type="erroneous initiation">
        <sequence resource="EMBL-CDS" id="BAA15155"/>
    </conflict>
    <text>Truncated N-terminus.</text>
</comment>
<dbReference type="EC" id="2.7.7.65"/>
<dbReference type="EMBL" id="U00096">
    <property type="protein sequence ID" value="AAC74563.3"/>
    <property type="molecule type" value="Genomic_DNA"/>
</dbReference>
<dbReference type="EMBL" id="AP009048">
    <property type="protein sequence ID" value="BAA15155.2"/>
    <property type="status" value="ALT_INIT"/>
    <property type="molecule type" value="Genomic_DNA"/>
</dbReference>
<dbReference type="PIR" id="E64902">
    <property type="entry name" value="E64902"/>
</dbReference>
<dbReference type="RefSeq" id="NP_416007.3">
    <property type="nucleotide sequence ID" value="NC_000913.3"/>
</dbReference>
<dbReference type="RefSeq" id="WP_000426292.1">
    <property type="nucleotide sequence ID" value="NZ_SSZK01000038.1"/>
</dbReference>
<dbReference type="PDB" id="4ZVA">
    <property type="method" value="X-ray"/>
    <property type="resolution" value="2.00 A"/>
    <property type="chains" value="A/B=8-170"/>
</dbReference>
<dbReference type="PDB" id="4ZVB">
    <property type="method" value="X-ray"/>
    <property type="resolution" value="2.40 A"/>
    <property type="chains" value="A/B/C/D=1-155"/>
</dbReference>
<dbReference type="PDB" id="4ZVC">
    <property type="method" value="X-ray"/>
    <property type="resolution" value="1.50 A"/>
    <property type="chains" value="A/B=173-298"/>
</dbReference>
<dbReference type="PDB" id="4ZVD">
    <property type="method" value="X-ray"/>
    <property type="resolution" value="1.90 A"/>
    <property type="chains" value="A/B=173-298"/>
</dbReference>
<dbReference type="PDB" id="4ZVE">
    <property type="method" value="X-ray"/>
    <property type="resolution" value="1.20 A"/>
    <property type="chains" value="A=297-460"/>
</dbReference>
<dbReference type="PDB" id="4ZVF">
    <property type="method" value="X-ray"/>
    <property type="resolution" value="1.15 A"/>
    <property type="chains" value="A=297-460"/>
</dbReference>
<dbReference type="PDB" id="4ZVG">
    <property type="method" value="X-ray"/>
    <property type="resolution" value="2.20 A"/>
    <property type="chains" value="A/B=297-460"/>
</dbReference>
<dbReference type="PDB" id="4ZVH">
    <property type="method" value="X-ray"/>
    <property type="resolution" value="3.30 A"/>
    <property type="chains" value="A/B=297-460"/>
</dbReference>
<dbReference type="PDBsum" id="4ZVA"/>
<dbReference type="PDBsum" id="4ZVB"/>
<dbReference type="PDBsum" id="4ZVC"/>
<dbReference type="PDBsum" id="4ZVD"/>
<dbReference type="PDBsum" id="4ZVE"/>
<dbReference type="PDBsum" id="4ZVF"/>
<dbReference type="PDBsum" id="4ZVG"/>
<dbReference type="PDBsum" id="4ZVH"/>
<dbReference type="SMR" id="P0AA89"/>
<dbReference type="BioGRID" id="4262162">
    <property type="interactions" value="7"/>
</dbReference>
<dbReference type="ComplexPortal" id="CPX-3982">
    <property type="entry name" value="dosPC diguanylate cyclase/c-di-GMP phosphodiesterase complex"/>
</dbReference>
<dbReference type="FunCoup" id="P0AA89">
    <property type="interactions" value="3"/>
</dbReference>
<dbReference type="STRING" id="511145.b1490"/>
<dbReference type="jPOST" id="P0AA89"/>
<dbReference type="PaxDb" id="511145-b1490"/>
<dbReference type="DNASU" id="945835"/>
<dbReference type="EnsemblBacteria" id="AAC74563">
    <property type="protein sequence ID" value="AAC74563"/>
    <property type="gene ID" value="b1490"/>
</dbReference>
<dbReference type="GeneID" id="75171576"/>
<dbReference type="GeneID" id="945835"/>
<dbReference type="KEGG" id="ecj:JW5241"/>
<dbReference type="KEGG" id="eco:b1490"/>
<dbReference type="KEGG" id="ecoc:C3026_08630"/>
<dbReference type="PATRIC" id="fig|1411691.4.peg.777"/>
<dbReference type="EchoBASE" id="EB3554"/>
<dbReference type="eggNOG" id="COG3706">
    <property type="taxonomic scope" value="Bacteria"/>
</dbReference>
<dbReference type="HOGENOM" id="CLU_000445_11_5_6"/>
<dbReference type="InParanoid" id="P0AA89"/>
<dbReference type="OMA" id="LAMEVMS"/>
<dbReference type="OrthoDB" id="9812260at2"/>
<dbReference type="BioCyc" id="EcoCyc:G6784-MONOMER"/>
<dbReference type="BioCyc" id="MetaCyc:G6784-MONOMER"/>
<dbReference type="BRENDA" id="2.7.7.65">
    <property type="organism ID" value="2026"/>
</dbReference>
<dbReference type="UniPathway" id="UPA00599"/>
<dbReference type="EvolutionaryTrace" id="P0AA89"/>
<dbReference type="PRO" id="PR:P0AA89"/>
<dbReference type="Proteomes" id="UP000000625">
    <property type="component" value="Chromosome"/>
</dbReference>
<dbReference type="GO" id="GO:0005886">
    <property type="term" value="C:plasma membrane"/>
    <property type="evidence" value="ECO:0000318"/>
    <property type="project" value="GO_Central"/>
</dbReference>
<dbReference type="GO" id="GO:0070025">
    <property type="term" value="F:carbon monoxide binding"/>
    <property type="evidence" value="ECO:0000314"/>
    <property type="project" value="EcoCyc"/>
</dbReference>
<dbReference type="GO" id="GO:0052621">
    <property type="term" value="F:diguanylate cyclase activity"/>
    <property type="evidence" value="ECO:0000314"/>
    <property type="project" value="EcoCyc"/>
</dbReference>
<dbReference type="GO" id="GO:0005525">
    <property type="term" value="F:GTP binding"/>
    <property type="evidence" value="ECO:0007669"/>
    <property type="project" value="UniProtKB-KW"/>
</dbReference>
<dbReference type="GO" id="GO:0020037">
    <property type="term" value="F:heme binding"/>
    <property type="evidence" value="ECO:0000314"/>
    <property type="project" value="EcoCyc"/>
</dbReference>
<dbReference type="GO" id="GO:0046872">
    <property type="term" value="F:metal ion binding"/>
    <property type="evidence" value="ECO:0007669"/>
    <property type="project" value="UniProtKB-KW"/>
</dbReference>
<dbReference type="GO" id="GO:0019825">
    <property type="term" value="F:oxygen binding"/>
    <property type="evidence" value="ECO:0000314"/>
    <property type="project" value="EcoCyc"/>
</dbReference>
<dbReference type="GO" id="GO:0042803">
    <property type="term" value="F:protein homodimerization activity"/>
    <property type="evidence" value="ECO:0000314"/>
    <property type="project" value="EcoCyc"/>
</dbReference>
<dbReference type="GO" id="GO:0043709">
    <property type="term" value="P:cell adhesion involved in single-species biofilm formation"/>
    <property type="evidence" value="ECO:0000318"/>
    <property type="project" value="GO_Central"/>
</dbReference>
<dbReference type="GO" id="GO:1902201">
    <property type="term" value="P:negative regulation of bacterial-type flagellum-dependent cell motility"/>
    <property type="evidence" value="ECO:0000318"/>
    <property type="project" value="GO_Central"/>
</dbReference>
<dbReference type="GO" id="GO:0070482">
    <property type="term" value="P:response to oxygen levels"/>
    <property type="evidence" value="ECO:0000314"/>
    <property type="project" value="ComplexPortal"/>
</dbReference>
<dbReference type="GO" id="GO:0006950">
    <property type="term" value="P:response to stress"/>
    <property type="evidence" value="ECO:0000270"/>
    <property type="project" value="EcoCyc"/>
</dbReference>
<dbReference type="CDD" id="cd01949">
    <property type="entry name" value="GGDEF"/>
    <property type="match status" value="1"/>
</dbReference>
<dbReference type="CDD" id="cd14757">
    <property type="entry name" value="GS_EcDosC-like_GGDEF"/>
    <property type="match status" value="1"/>
</dbReference>
<dbReference type="FunFam" id="3.30.70.270:FF:000001">
    <property type="entry name" value="Diguanylate cyclase domain protein"/>
    <property type="match status" value="1"/>
</dbReference>
<dbReference type="FunFam" id="1.10.490.10:FF:000007">
    <property type="entry name" value="Diguanylate cyclase DosC"/>
    <property type="match status" value="1"/>
</dbReference>
<dbReference type="Gene3D" id="3.30.70.270">
    <property type="match status" value="1"/>
</dbReference>
<dbReference type="Gene3D" id="1.10.490.10">
    <property type="entry name" value="Globins"/>
    <property type="match status" value="1"/>
</dbReference>
<dbReference type="InterPro" id="IPR050469">
    <property type="entry name" value="Diguanylate_Cyclase"/>
</dbReference>
<dbReference type="InterPro" id="IPR048442">
    <property type="entry name" value="DosC_2nd"/>
</dbReference>
<dbReference type="InterPro" id="IPR039435">
    <property type="entry name" value="DosC_GS"/>
</dbReference>
<dbReference type="InterPro" id="IPR000160">
    <property type="entry name" value="GGDEF_dom"/>
</dbReference>
<dbReference type="InterPro" id="IPR009050">
    <property type="entry name" value="Globin-like_sf"/>
</dbReference>
<dbReference type="InterPro" id="IPR044398">
    <property type="entry name" value="Globin-sensor_dom"/>
</dbReference>
<dbReference type="InterPro" id="IPR012292">
    <property type="entry name" value="Globin/Proto"/>
</dbReference>
<dbReference type="InterPro" id="IPR029787">
    <property type="entry name" value="Nucleotide_cyclase"/>
</dbReference>
<dbReference type="InterPro" id="IPR043128">
    <property type="entry name" value="Rev_trsase/Diguanyl_cyclase"/>
</dbReference>
<dbReference type="NCBIfam" id="TIGR00254">
    <property type="entry name" value="GGDEF"/>
    <property type="match status" value="1"/>
</dbReference>
<dbReference type="PANTHER" id="PTHR45138:SF9">
    <property type="entry name" value="DIGUANYLATE CYCLASE DGCM-RELATED"/>
    <property type="match status" value="1"/>
</dbReference>
<dbReference type="PANTHER" id="PTHR45138">
    <property type="entry name" value="REGULATORY COMPONENTS OF SENSORY TRANSDUCTION SYSTEM"/>
    <property type="match status" value="1"/>
</dbReference>
<dbReference type="Pfam" id="PF21118">
    <property type="entry name" value="DosC_2nd"/>
    <property type="match status" value="1"/>
</dbReference>
<dbReference type="Pfam" id="PF00990">
    <property type="entry name" value="GGDEF"/>
    <property type="match status" value="1"/>
</dbReference>
<dbReference type="Pfam" id="PF11563">
    <property type="entry name" value="Protoglobin"/>
    <property type="match status" value="1"/>
</dbReference>
<dbReference type="SMART" id="SM00267">
    <property type="entry name" value="GGDEF"/>
    <property type="match status" value="1"/>
</dbReference>
<dbReference type="SUPFAM" id="SSF46458">
    <property type="entry name" value="Globin-like"/>
    <property type="match status" value="1"/>
</dbReference>
<dbReference type="SUPFAM" id="SSF55073">
    <property type="entry name" value="Nucleotide cyclase"/>
    <property type="match status" value="1"/>
</dbReference>
<dbReference type="PROSITE" id="PS50887">
    <property type="entry name" value="GGDEF"/>
    <property type="match status" value="1"/>
</dbReference>
<protein>
    <recommendedName>
        <fullName>Diguanylate cyclase DosC</fullName>
        <shortName>DGC</shortName>
        <ecNumber>2.7.7.65</ecNumber>
    </recommendedName>
    <alternativeName>
        <fullName>Direct oxygen-sensing cyclase</fullName>
    </alternativeName>
</protein>
<feature type="chain" id="PRO_0000201321" description="Diguanylate cyclase DosC">
    <location>
        <begin position="1"/>
        <end position="460"/>
    </location>
</feature>
<feature type="domain" description="GGDEF" evidence="3">
    <location>
        <begin position="325"/>
        <end position="458"/>
    </location>
</feature>
<feature type="active site" description="Proton acceptor" evidence="2">
    <location>
        <position position="376"/>
    </location>
</feature>
<feature type="binding site" description="proximal binding residue">
    <location>
        <position position="98"/>
    </location>
    <ligand>
        <name>heme</name>
        <dbReference type="ChEBI" id="CHEBI:30413"/>
    </ligand>
    <ligandPart>
        <name>Fe</name>
        <dbReference type="ChEBI" id="CHEBI:18248"/>
    </ligandPart>
</feature>
<feature type="binding site" evidence="1">
    <location>
        <position position="333"/>
    </location>
    <ligand>
        <name>Mg(2+)</name>
        <dbReference type="ChEBI" id="CHEBI:18420"/>
    </ligand>
</feature>
<feature type="binding site" evidence="1">
    <location>
        <position position="341"/>
    </location>
    <ligand>
        <name>substrate</name>
    </ligand>
</feature>
<feature type="binding site" evidence="1">
    <location>
        <position position="350"/>
    </location>
    <ligand>
        <name>substrate</name>
    </ligand>
</feature>
<feature type="binding site" evidence="1">
    <location>
        <position position="376"/>
    </location>
    <ligand>
        <name>Mg(2+)</name>
        <dbReference type="ChEBI" id="CHEBI:18420"/>
    </ligand>
</feature>
<feature type="site" description="Involved in oxygen binding and important for the stability of the Fe(II)-O(2) complex">
    <location>
        <position position="43"/>
    </location>
</feature>
<feature type="site" description="Important for oxygen binding and stability of the Fe(II)-O(2) complex">
    <location>
        <position position="60"/>
    </location>
</feature>
<feature type="site" description="Critical for restricting water access to the heme distal side to avoid rapid autoxidation">
    <location>
        <position position="65"/>
    </location>
</feature>
<feature type="site" description="Transition state stabilizer" evidence="2">
    <location>
        <position position="338"/>
    </location>
</feature>
<feature type="mutagenesis site" description="Same biofilm formation activity as wild-type. Large decrease in O(2) affinity." evidence="9">
    <original>Y</original>
    <variation>A</variation>
    <variation>L</variation>
    <location>
        <position position="43"/>
    </location>
</feature>
<feature type="mutagenesis site" description="Same biofilm formation activity as wild-type. Markedly enhanced O(2) dissociation but not association rate constants. Highly enhanced autoxidation rate constant." evidence="9">
    <original>Y</original>
    <variation>F</variation>
    <variation>W</variation>
    <location>
        <position position="43"/>
    </location>
</feature>
<feature type="mutagenesis site" description="Same biofilm formation activity as wild-type. Enhanced O(2) dissociation but not association rate constants. Enhanced autoxidation rate constant." evidence="9">
    <original>Q</original>
    <variation>A</variation>
    <variation>E</variation>
    <location>
        <position position="60"/>
    </location>
</feature>
<feature type="mutagenesis site" description="Same biofilm formation activity as wild-type. 5-fold reduction in O(2) dissociation rate constant. Significant decrease in the autoxidation rate constant." evidence="9">
    <original>Q</original>
    <variation>L</variation>
    <location>
        <position position="60"/>
    </location>
</feature>
<feature type="mutagenesis site" description="Enhanced autoxidation rate constant. Markedly enhanced O(2) association rate constant." evidence="10">
    <original>L</original>
    <variation>G</variation>
    <variation>T</variation>
    <location>
        <position position="65"/>
    </location>
</feature>
<feature type="mutagenesis site" description="Enhanced autoxidation rate constant. Decrease in O(2) association rate constant." evidence="10">
    <original>L</original>
    <variation>M</variation>
    <variation>Q</variation>
    <location>
        <position position="65"/>
    </location>
</feature>
<feature type="mutagenesis site" description="Same biofilm formation activity as wild-type. Loss of heme-binding ability." evidence="9">
    <original>H</original>
    <variation>A</variation>
    <location>
        <position position="98"/>
    </location>
</feature>
<feature type="mutagenesis site" description="Same biofilm formation activity as wild-type." evidence="9">
    <original>H</original>
    <variation>A</variation>
    <location>
        <position position="223"/>
    </location>
</feature>
<feature type="mutagenesis site" description="Same biofilm formation activity as wild-type." evidence="9">
    <original>R</original>
    <variation>A</variation>
    <location>
        <position position="365"/>
    </location>
</feature>
<feature type="mutagenesis site" description="Lacks biofilm formation activity, and thus is probably devoid of diguanylate cyclase activity." evidence="9">
    <original>D</original>
    <variation>A</variation>
    <location>
        <position position="368"/>
    </location>
</feature>
<feature type="mutagenesis site" description="Loss of DGC activity. Stimulation of PNAG production and activation of pgaABCD expression are abolished." evidence="8">
    <original>DE</original>
    <variation>AA</variation>
    <location>
        <begin position="376"/>
        <end position="377"/>
    </location>
</feature>
<feature type="mutagenesis site" description="Lacks biofilm formation activity, and thus is probably devoid of diguanylate cyclase activity." evidence="9">
    <original>D</original>
    <variation>A</variation>
    <location>
        <position position="376"/>
    </location>
</feature>
<feature type="mutagenesis site" description="Lacks biofilm formation activity, and thus is probably devoid of diguanylate cyclase activity." evidence="9">
    <original>E</original>
    <variation>A</variation>
    <location>
        <position position="377"/>
    </location>
</feature>
<feature type="helix" evidence="13">
    <location>
        <begin position="8"/>
        <end position="18"/>
    </location>
</feature>
<feature type="helix" evidence="13">
    <location>
        <begin position="21"/>
        <end position="48"/>
    </location>
</feature>
<feature type="helix" evidence="13">
    <location>
        <begin position="50"/>
        <end position="53"/>
    </location>
</feature>
<feature type="helix" evidence="13">
    <location>
        <begin position="59"/>
        <end position="77"/>
    </location>
</feature>
<feature type="helix" evidence="13">
    <location>
        <begin position="81"/>
        <end position="83"/>
    </location>
</feature>
<feature type="helix" evidence="13">
    <location>
        <begin position="84"/>
        <end position="101"/>
    </location>
</feature>
<feature type="helix" evidence="13">
    <location>
        <begin position="105"/>
        <end position="124"/>
    </location>
</feature>
<feature type="strand" evidence="13">
    <location>
        <begin position="126"/>
        <end position="128"/>
    </location>
</feature>
<feature type="helix" evidence="13">
    <location>
        <begin position="130"/>
        <end position="152"/>
    </location>
</feature>
<feature type="helix" evidence="14">
    <location>
        <begin position="178"/>
        <end position="203"/>
    </location>
</feature>
<feature type="helix" evidence="14">
    <location>
        <begin position="212"/>
        <end position="214"/>
    </location>
</feature>
<feature type="helix" evidence="14">
    <location>
        <begin position="216"/>
        <end position="223"/>
    </location>
</feature>
<feature type="helix" evidence="14">
    <location>
        <begin position="225"/>
        <end position="228"/>
    </location>
</feature>
<feature type="turn" evidence="14">
    <location>
        <begin position="229"/>
        <end position="231"/>
    </location>
</feature>
<feature type="helix" evidence="14">
    <location>
        <begin position="233"/>
        <end position="254"/>
    </location>
</feature>
<feature type="helix" evidence="14">
    <location>
        <begin position="256"/>
        <end position="260"/>
    </location>
</feature>
<feature type="helix" evidence="14">
    <location>
        <begin position="262"/>
        <end position="291"/>
    </location>
</feature>
<feature type="helix" evidence="15">
    <location>
        <begin position="299"/>
        <end position="302"/>
    </location>
</feature>
<feature type="strand" evidence="15">
    <location>
        <begin position="303"/>
        <end position="305"/>
    </location>
</feature>
<feature type="helix" evidence="15">
    <location>
        <begin position="306"/>
        <end position="308"/>
    </location>
</feature>
<feature type="helix" evidence="15">
    <location>
        <begin position="309"/>
        <end position="323"/>
    </location>
</feature>
<feature type="strand" evidence="15">
    <location>
        <begin position="327"/>
        <end position="334"/>
    </location>
</feature>
<feature type="helix" evidence="15">
    <location>
        <begin position="337"/>
        <end position="344"/>
    </location>
</feature>
<feature type="helix" evidence="15">
    <location>
        <begin position="346"/>
        <end position="363"/>
    </location>
</feature>
<feature type="strand" evidence="15">
    <location>
        <begin position="368"/>
        <end position="374"/>
    </location>
</feature>
<feature type="strand" evidence="15">
    <location>
        <begin position="377"/>
        <end position="384"/>
    </location>
</feature>
<feature type="helix" evidence="15">
    <location>
        <begin position="387"/>
        <end position="402"/>
    </location>
</feature>
<feature type="strand" evidence="16">
    <location>
        <begin position="409"/>
        <end position="411"/>
    </location>
</feature>
<feature type="strand" evidence="15">
    <location>
        <begin position="418"/>
        <end position="424"/>
    </location>
</feature>
<feature type="helix" evidence="15">
    <location>
        <begin position="431"/>
        <end position="447"/>
    </location>
</feature>
<feature type="strand" evidence="15">
    <location>
        <begin position="453"/>
        <end position="455"/>
    </location>
</feature>
<reference key="1">
    <citation type="journal article" date="1996" name="DNA Res.">
        <title>A 570-kb DNA sequence of the Escherichia coli K-12 genome corresponding to the 28.0-40.1 min region on the linkage map.</title>
        <authorList>
            <person name="Aiba H."/>
            <person name="Baba T."/>
            <person name="Fujita K."/>
            <person name="Hayashi K."/>
            <person name="Inada T."/>
            <person name="Isono K."/>
            <person name="Itoh T."/>
            <person name="Kasai H."/>
            <person name="Kashimoto K."/>
            <person name="Kimura S."/>
            <person name="Kitakawa M."/>
            <person name="Kitagawa M."/>
            <person name="Makino K."/>
            <person name="Miki T."/>
            <person name="Mizobuchi K."/>
            <person name="Mori H."/>
            <person name="Mori T."/>
            <person name="Motomura K."/>
            <person name="Nakade S."/>
            <person name="Nakamura Y."/>
            <person name="Nashimoto H."/>
            <person name="Nishio Y."/>
            <person name="Oshima T."/>
            <person name="Saito N."/>
            <person name="Sampei G."/>
            <person name="Seki Y."/>
            <person name="Sivasundaram S."/>
            <person name="Tagami H."/>
            <person name="Takeda J."/>
            <person name="Takemoto K."/>
            <person name="Takeuchi Y."/>
            <person name="Wada C."/>
            <person name="Yamamoto Y."/>
            <person name="Horiuchi T."/>
        </authorList>
    </citation>
    <scope>NUCLEOTIDE SEQUENCE [LARGE SCALE GENOMIC DNA]</scope>
    <source>
        <strain>K12 / W3110 / ATCC 27325 / DSM 5911</strain>
    </source>
</reference>
<reference key="2">
    <citation type="journal article" date="1997" name="Science">
        <title>The complete genome sequence of Escherichia coli K-12.</title>
        <authorList>
            <person name="Blattner F.R."/>
            <person name="Plunkett G. III"/>
            <person name="Bloch C.A."/>
            <person name="Perna N.T."/>
            <person name="Burland V."/>
            <person name="Riley M."/>
            <person name="Collado-Vides J."/>
            <person name="Glasner J.D."/>
            <person name="Rode C.K."/>
            <person name="Mayhew G.F."/>
            <person name="Gregor J."/>
            <person name="Davis N.W."/>
            <person name="Kirkpatrick H.A."/>
            <person name="Goeden M.A."/>
            <person name="Rose D.J."/>
            <person name="Mau B."/>
            <person name="Shao Y."/>
        </authorList>
    </citation>
    <scope>NUCLEOTIDE SEQUENCE [LARGE SCALE GENOMIC DNA]</scope>
    <source>
        <strain>K12 / MG1655 / ATCC 47076</strain>
    </source>
</reference>
<reference key="3">
    <citation type="journal article" date="2006" name="Mol. Syst. Biol.">
        <title>Highly accurate genome sequences of Escherichia coli K-12 strains MG1655 and W3110.</title>
        <authorList>
            <person name="Hayashi K."/>
            <person name="Morooka N."/>
            <person name="Yamamoto Y."/>
            <person name="Fujita K."/>
            <person name="Isono K."/>
            <person name="Choi S."/>
            <person name="Ohtsubo E."/>
            <person name="Baba T."/>
            <person name="Wanner B.L."/>
            <person name="Mori H."/>
            <person name="Horiuchi T."/>
        </authorList>
    </citation>
    <scope>NUCLEOTIDE SEQUENCE [LARGE SCALE GENOMIC DNA]</scope>
    <source>
        <strain>K12 / W3110 / ATCC 27325 / DSM 5911</strain>
    </source>
</reference>
<reference key="4">
    <citation type="journal article" date="2006" name="J. Biol. Chem.">
        <title>Genome-wide transcriptional profile of Escherichia coli in response to high levels of the second messenger 3',5'-cyclic diguanylic acid.</title>
        <authorList>
            <person name="Mendez-Ortiz M.M."/>
            <person name="Hyodo M."/>
            <person name="Hayakawa Y."/>
            <person name="Membrillo-Hernandez J."/>
        </authorList>
    </citation>
    <scope>FUNCTION AS A DIGUANYLATE CYCLASE</scope>
    <scope>OPERON STRUCTURE</scope>
    <source>
        <strain>K12 / MG1655 / ATCC 47076</strain>
        <strain>K12 / W3110 / ATCC 27325 / DSM 5911</strain>
        <strain>TOB1</strain>
    </source>
</reference>
<reference key="5">
    <citation type="journal article" date="2006" name="Mol. Microbiol.">
        <title>Cyclic-di-GMP-mediated signalling within the sigma network of Escherichia coli.</title>
        <authorList>
            <person name="Weber H."/>
            <person name="Pesavento C."/>
            <person name="Possling A."/>
            <person name="Tischendorf G."/>
            <person name="Hengge R."/>
        </authorList>
    </citation>
    <scope>RPOS-DEPENDENCE</scope>
    <source>
        <strain>K12 / MC4100</strain>
    </source>
</reference>
<reference key="6">
    <citation type="journal article" date="2009" name="Biochemistry">
        <title>An oxygen-sensing diguanylate cyclase and phosphodiesterase couple for c-di-GMP control.</title>
        <authorList>
            <person name="Tuckerman J.R."/>
            <person name="Gonzalez G."/>
            <person name="Sousa E.H."/>
            <person name="Wan X."/>
            <person name="Saito J.A."/>
            <person name="Alam M."/>
            <person name="Gilles-Gonzalez M.A."/>
        </authorList>
    </citation>
    <scope>CATALYTIC ACTIVITY</scope>
    <scope>HEME COFACTOR</scope>
    <scope>O(2)-BINDING</scope>
    <scope>INTERACTION WITH DOSP</scope>
    <scope>OPERON STRUCTURE</scope>
</reference>
<reference key="7">
    <citation type="journal article" date="2009" name="Microbiology">
        <title>Gene expression patterns and differential input into curli fimbriae regulation of all GGDEF/EAL domain proteins in Escherichia coli.</title>
        <authorList>
            <person name="Sommerfeldt N."/>
            <person name="Possling A."/>
            <person name="Becker G."/>
            <person name="Pesavento C."/>
            <person name="Tschowri N."/>
            <person name="Hengge R."/>
        </authorList>
    </citation>
    <scope>INDUCTION</scope>
    <scope>RPOS-DEPENDENCE</scope>
    <source>
        <strain>K12 / W3110 / ATCC 27325 / DSM 5911</strain>
    </source>
</reference>
<reference key="8">
    <citation type="journal article" date="2010" name="Biochemistry">
        <title>Important roles of Tyr43 at the putative heme distal side in the oxygen recognition and stability of the Fe(II)-O2 complex of YddV, a globin-coupled heme-based oxygen sensor diguanylate cyclase.</title>
        <authorList>
            <person name="Kitanishi K."/>
            <person name="Kobayashi K."/>
            <person name="Kawamura Y."/>
            <person name="Ishigami I."/>
            <person name="Ogura T."/>
            <person name="Nakajima K."/>
            <person name="Igarashi J."/>
            <person name="Tanaka A."/>
            <person name="Shimizu T."/>
        </authorList>
    </citation>
    <scope>FUNCTION</scope>
    <scope>CATALYTIC ACTIVITY</scope>
    <scope>ACTIVITY REGULATION</scope>
    <scope>DOMAIN</scope>
    <scope>O(2)-BINDING</scope>
    <scope>CO-BINDING</scope>
    <scope>CYANIDE-BINDING</scope>
    <scope>IMIDAZOLE-BINDING</scope>
    <scope>KINETIC PARAMETERS</scope>
    <scope>REDOX POTENTIAL</scope>
    <scope>MUTAGENESIS OF TYR-43; GLN-60; HIS-98; HIS-223; ARG-365; ASP-368; ASP-376 AND GLU-377</scope>
    <scope>ABSORPTION SPECTROSCOPY</scope>
    <scope>RESONANCE RAMAN SPECTROSCOPY</scope>
    <source>
        <strain>K12</strain>
    </source>
</reference>
<reference key="9">
    <citation type="journal article" date="2010" name="Cell">
        <title>Second messenger-mediated adjustment of bacterial swimming velocity.</title>
        <authorList>
            <person name="Boehm A."/>
            <person name="Kaiser M."/>
            <person name="Li H."/>
            <person name="Spangler C."/>
            <person name="Kasper C.A."/>
            <person name="Ackermann M."/>
            <person name="Kaever V."/>
            <person name="Sourjik V."/>
            <person name="Roth V."/>
            <person name="Jenal U."/>
        </authorList>
    </citation>
    <scope>ROLE IN MOTILITY</scope>
    <scope>DISRUPTION PHENOTYPE</scope>
    <source>
        <strain>K12 / MG1655 / ATCC 47076</strain>
    </source>
</reference>
<reference key="10">
    <citation type="journal article" date="2010" name="FEMS Immunol. Med. Microbiol.">
        <title>The yddV-dos operon controls biofilm formation through the regulation of genes encoding curli fibers' subunits in aerobically growing Escherichia coli.</title>
        <authorList>
            <person name="Tagliabue L."/>
            <person name="Maciag A."/>
            <person name="Antoniani D."/>
            <person name="Landini P."/>
        </authorList>
    </citation>
    <scope>FUNCTION IN REGULATION OF CSGBAC EXPRESSION</scope>
    <scope>DISRUPTION PHENOTYPE</scope>
    <scope>INDUCTION</scope>
    <source>
        <strain>K12 / MG1655 / ATCC 47076</strain>
    </source>
</reference>
<reference key="11">
    <citation type="journal article" date="2010" name="Microbiology">
        <title>The diguanylate cyclase YddV controls production of the exopolysaccharide poly-N-acetylglucosamine (PNAG) through regulation of the PNAG biosynthetic pgaABCD operon.</title>
        <authorList>
            <person name="Tagliabue L."/>
            <person name="Antoniani D."/>
            <person name="Maciag A."/>
            <person name="Bocci P."/>
            <person name="Raffaelli N."/>
            <person name="Landini P."/>
        </authorList>
    </citation>
    <scope>FUNCTION IN REGULATION OF PGAABCD EXPRESSION</scope>
    <scope>DISRUPTION PHENOTYPE</scope>
    <scope>MUTAGENESIS OF 376-ASP-GLU-377</scope>
    <source>
        <strain>K12 / MG1655 / ATCC 47076</strain>
    </source>
</reference>
<reference key="12">
    <citation type="journal article" date="2012" name="J. Inorg. Biochem.">
        <title>Leu65 in the heme distal side is critical for the stability of the Fe(II)-O(2) complex of YddV, a globin-coupled oxygen sensor diguanylate cyclase.</title>
        <authorList>
            <person name="Nakajima K."/>
            <person name="Kitanishi K."/>
            <person name="Kobayashi K."/>
            <person name="Kobayashi N."/>
            <person name="Igarashi J."/>
            <person name="Shimizu T."/>
        </authorList>
    </citation>
    <scope>MUTAGENESIS OF LEU-65</scope>
    <scope>ABSORPTION SPECTROSCOPY</scope>
    <source>
        <strain>K12</strain>
    </source>
</reference>
<reference key="13">
    <citation type="journal article" date="2015" name="J. Bacteriol.">
        <title>Systematic nomenclature for GGDEF and EAL domain-containing cyclic di-GMP turnover proteins of Escherichia coli.</title>
        <authorList>
            <person name="Hengge R."/>
            <person name="Galperin M.Y."/>
            <person name="Ghigo J.M."/>
            <person name="Gomelsky M."/>
            <person name="Green J."/>
            <person name="Hughes K.T."/>
            <person name="Jenal U."/>
            <person name="Landini P."/>
        </authorList>
    </citation>
    <scope>NOMENCLATURE</scope>
</reference>
<evidence type="ECO:0000250" key="1"/>
<evidence type="ECO:0000255" key="2"/>
<evidence type="ECO:0000255" key="3">
    <source>
        <dbReference type="PROSITE-ProRule" id="PRU00095"/>
    </source>
</evidence>
<evidence type="ECO:0000269" key="4">
    <source>
    </source>
</evidence>
<evidence type="ECO:0000269" key="5">
    <source>
    </source>
</evidence>
<evidence type="ECO:0000269" key="6">
    <source>
    </source>
</evidence>
<evidence type="ECO:0000269" key="7">
    <source>
    </source>
</evidence>
<evidence type="ECO:0000269" key="8">
    <source>
    </source>
</evidence>
<evidence type="ECO:0000269" key="9">
    <source>
    </source>
</evidence>
<evidence type="ECO:0000269" key="10">
    <source>
    </source>
</evidence>
<evidence type="ECO:0000303" key="11">
    <source>
    </source>
</evidence>
<evidence type="ECO:0000305" key="12"/>
<evidence type="ECO:0007829" key="13">
    <source>
        <dbReference type="PDB" id="4ZVA"/>
    </source>
</evidence>
<evidence type="ECO:0007829" key="14">
    <source>
        <dbReference type="PDB" id="4ZVC"/>
    </source>
</evidence>
<evidence type="ECO:0007829" key="15">
    <source>
        <dbReference type="PDB" id="4ZVF"/>
    </source>
</evidence>
<evidence type="ECO:0007829" key="16">
    <source>
        <dbReference type="PDB" id="4ZVH"/>
    </source>
</evidence>
<gene>
    <name type="primary">dosC</name>
    <name evidence="11" type="synonym">dgcO</name>
    <name type="synonym">yddV</name>
    <name type="ordered locus">b1490</name>
    <name type="ordered locus">JW5241</name>
</gene>
<name>DOSC_ECOLI</name>
<sequence length="460" mass="53178">MEMYFKRMKDEWTGLVEQADPPIRAKAAEIAVAHAHYLSIEFYRIVRIDPHAEEFLSNEQVERQLKSAMERWIINVLSAQVDDVERLIQIQHTVAEVHARIGIPVEIVEMGFRVLKKILYPVIFSSDYSAAEKLQVYHFSINSIDIAMEVMTRAFTFSDSSASKEDENYRIFSLLENAEEEKERQIASILSWEIDIIYKILLDSDLGSSLPLSQADFGLWFNHKGRHYFSGIAEVGHISRLIQDFDGIFNQTMRNTRNLNNRSLRVKFLLQIRNTVSQIITLLRELFEEVSRHEVGMDVLTKLLNRRFLPTIFKREIAHANRTGTPLSVLIIDVDKFKEINDTWGHNTGDEILRKVSQAFYDNVRSSDYVFRYGGDEFIIVLTEASENETLRTAERIRSRVEKTKLKAANGEDIALSLSIGAAMFNGHPDYERLIQIADEALYIAKRRGRNRVELWKASL</sequence>
<accession>P0AA89</accession>
<accession>P77793</accession>